<comment type="function">
    <text evidence="1">Involved in the regulation of growth and apoptosis. Mediates activation of stress-responsive MTK1/MEKK4 MAPKKK (By similarity).</text>
</comment>
<comment type="subunit">
    <text evidence="1">Interacts with GADD45GIP1.</text>
</comment>
<comment type="similarity">
    <text evidence="2">Belongs to the GADD45 family.</text>
</comment>
<dbReference type="EMBL" id="BT021015">
    <property type="protein sequence ID" value="AAX09032.1"/>
    <property type="molecule type" value="mRNA"/>
</dbReference>
<dbReference type="EMBL" id="BC113347">
    <property type="protein sequence ID" value="AAI13348.1"/>
    <property type="molecule type" value="mRNA"/>
</dbReference>
<dbReference type="RefSeq" id="NP_001035694.1">
    <property type="nucleotide sequence ID" value="NM_001040604.1"/>
</dbReference>
<dbReference type="SMR" id="Q5E9A5"/>
<dbReference type="FunCoup" id="Q5E9A5">
    <property type="interactions" value="575"/>
</dbReference>
<dbReference type="STRING" id="9913.ENSBTAP00000035670"/>
<dbReference type="PaxDb" id="9913-ENSBTAP00000035670"/>
<dbReference type="Ensembl" id="ENSBTAT00000035803.5">
    <property type="protein sequence ID" value="ENSBTAP00000035670.3"/>
    <property type="gene ID" value="ENSBTAG00000025462.5"/>
</dbReference>
<dbReference type="GeneID" id="618405"/>
<dbReference type="KEGG" id="bta:618405"/>
<dbReference type="CTD" id="4616"/>
<dbReference type="VEuPathDB" id="HostDB:ENSBTAG00000025462"/>
<dbReference type="VGNC" id="VGNC:29207">
    <property type="gene designation" value="GADD45B"/>
</dbReference>
<dbReference type="eggNOG" id="ENOG502RY00">
    <property type="taxonomic scope" value="Eukaryota"/>
</dbReference>
<dbReference type="GeneTree" id="ENSGT00950000182964"/>
<dbReference type="HOGENOM" id="CLU_118164_0_0_1"/>
<dbReference type="InParanoid" id="Q5E9A5"/>
<dbReference type="OMA" id="YCEESRE"/>
<dbReference type="OrthoDB" id="5976967at2759"/>
<dbReference type="TreeFam" id="TF300196"/>
<dbReference type="Proteomes" id="UP000009136">
    <property type="component" value="Chromosome 7"/>
</dbReference>
<dbReference type="Bgee" id="ENSBTAG00000025462">
    <property type="expression patterns" value="Expressed in intramuscular adipose tissue and 103 other cell types or tissues"/>
</dbReference>
<dbReference type="GO" id="GO:0005737">
    <property type="term" value="C:cytoplasm"/>
    <property type="evidence" value="ECO:0000318"/>
    <property type="project" value="GO_Central"/>
</dbReference>
<dbReference type="GO" id="GO:0005634">
    <property type="term" value="C:nucleus"/>
    <property type="evidence" value="ECO:0000318"/>
    <property type="project" value="GO_Central"/>
</dbReference>
<dbReference type="GO" id="GO:0006915">
    <property type="term" value="P:apoptotic process"/>
    <property type="evidence" value="ECO:0007669"/>
    <property type="project" value="UniProtKB-KW"/>
</dbReference>
<dbReference type="GO" id="GO:0030154">
    <property type="term" value="P:cell differentiation"/>
    <property type="evidence" value="ECO:0007669"/>
    <property type="project" value="UniProtKB-KW"/>
</dbReference>
<dbReference type="GO" id="GO:0043065">
    <property type="term" value="P:positive regulation of apoptotic process"/>
    <property type="evidence" value="ECO:0007669"/>
    <property type="project" value="Ensembl"/>
</dbReference>
<dbReference type="GO" id="GO:0046330">
    <property type="term" value="P:positive regulation of JNK cascade"/>
    <property type="evidence" value="ECO:0007669"/>
    <property type="project" value="Ensembl"/>
</dbReference>
<dbReference type="GO" id="GO:1900745">
    <property type="term" value="P:positive regulation of p38MAPK cascade"/>
    <property type="evidence" value="ECO:0007669"/>
    <property type="project" value="Ensembl"/>
</dbReference>
<dbReference type="GO" id="GO:0051726">
    <property type="term" value="P:regulation of cell cycle"/>
    <property type="evidence" value="ECO:0000318"/>
    <property type="project" value="GO_Central"/>
</dbReference>
<dbReference type="FunFam" id="3.30.1330.30:FF:000012">
    <property type="entry name" value="growth arrest and DNA damage-inducible protein GADD45 alpha"/>
    <property type="match status" value="1"/>
</dbReference>
<dbReference type="Gene3D" id="3.30.1330.30">
    <property type="match status" value="1"/>
</dbReference>
<dbReference type="InterPro" id="IPR024824">
    <property type="entry name" value="GADD45"/>
</dbReference>
<dbReference type="InterPro" id="IPR029064">
    <property type="entry name" value="Ribosomal_eL30-like_sf"/>
</dbReference>
<dbReference type="InterPro" id="IPR004038">
    <property type="entry name" value="Ribosomal_eL8/eL30/eS12/Gad45"/>
</dbReference>
<dbReference type="PANTHER" id="PTHR10411">
    <property type="entry name" value="GROWTH ARREST AND DNA DAMAGE-INDUCIBLE PROTEIN GADD45"/>
    <property type="match status" value="1"/>
</dbReference>
<dbReference type="PANTHER" id="PTHR10411:SF5">
    <property type="entry name" value="GROWTH ARREST AND DNA DAMAGE-INDUCIBLE PROTEIN GADD45 BETA"/>
    <property type="match status" value="1"/>
</dbReference>
<dbReference type="Pfam" id="PF01248">
    <property type="entry name" value="Ribosomal_L7Ae"/>
    <property type="match status" value="1"/>
</dbReference>
<dbReference type="SUPFAM" id="SSF55315">
    <property type="entry name" value="L30e-like"/>
    <property type="match status" value="1"/>
</dbReference>
<sequence length="160" mass="17806">MTLEELVACDNAAQKMQTVSAAVEELLVAAQLQDRLTVGVYESAKLMNVDPDSVVLCLLAIDEEEEDDIALQIHFTLIQSFCCENDIDIVRVSGMQRLAQLLGEPAETQGTTEARDLHCLLVTNPHTDTWKSHGLVEVASYCEESRGNNQWVPYISLQER</sequence>
<protein>
    <recommendedName>
        <fullName>Growth arrest and DNA damage-inducible protein GADD45 beta</fullName>
    </recommendedName>
</protein>
<proteinExistence type="evidence at transcript level"/>
<reference key="1">
    <citation type="journal article" date="2005" name="BMC Genomics">
        <title>Characterization of 954 bovine full-CDS cDNA sequences.</title>
        <authorList>
            <person name="Harhay G.P."/>
            <person name="Sonstegard T.S."/>
            <person name="Keele J.W."/>
            <person name="Heaton M.P."/>
            <person name="Clawson M.L."/>
            <person name="Snelling W.M."/>
            <person name="Wiedmann R.T."/>
            <person name="Van Tassell C.P."/>
            <person name="Smith T.P.L."/>
        </authorList>
    </citation>
    <scope>NUCLEOTIDE SEQUENCE [LARGE SCALE MRNA]</scope>
</reference>
<reference key="2">
    <citation type="submission" date="2006-02" db="EMBL/GenBank/DDBJ databases">
        <authorList>
            <consortium name="NIH - Mammalian Gene Collection (MGC) project"/>
        </authorList>
    </citation>
    <scope>NUCLEOTIDE SEQUENCE [LARGE SCALE MRNA]</scope>
    <source>
        <strain>Hereford</strain>
        <tissue>Uterus</tissue>
    </source>
</reference>
<keyword id="KW-0053">Apoptosis</keyword>
<keyword id="KW-0217">Developmental protein</keyword>
<keyword id="KW-0221">Differentiation</keyword>
<keyword id="KW-1185">Reference proteome</keyword>
<name>GA45B_BOVIN</name>
<organism>
    <name type="scientific">Bos taurus</name>
    <name type="common">Bovine</name>
    <dbReference type="NCBI Taxonomy" id="9913"/>
    <lineage>
        <taxon>Eukaryota</taxon>
        <taxon>Metazoa</taxon>
        <taxon>Chordata</taxon>
        <taxon>Craniata</taxon>
        <taxon>Vertebrata</taxon>
        <taxon>Euteleostomi</taxon>
        <taxon>Mammalia</taxon>
        <taxon>Eutheria</taxon>
        <taxon>Laurasiatheria</taxon>
        <taxon>Artiodactyla</taxon>
        <taxon>Ruminantia</taxon>
        <taxon>Pecora</taxon>
        <taxon>Bovidae</taxon>
        <taxon>Bovinae</taxon>
        <taxon>Bos</taxon>
    </lineage>
</organism>
<feature type="chain" id="PRO_0000228618" description="Growth arrest and DNA damage-inducible protein GADD45 beta">
    <location>
        <begin position="1"/>
        <end position="160"/>
    </location>
</feature>
<evidence type="ECO:0000250" key="1"/>
<evidence type="ECO:0000305" key="2"/>
<gene>
    <name type="primary">GADD45B</name>
</gene>
<accession>Q5E9A5</accession>